<dbReference type="EMBL" id="AP010904">
    <property type="protein sequence ID" value="BAH76608.1"/>
    <property type="molecule type" value="Genomic_DNA"/>
</dbReference>
<dbReference type="RefSeq" id="WP_006919824.1">
    <property type="nucleotide sequence ID" value="NC_012796.1"/>
</dbReference>
<dbReference type="SMR" id="C4XIP0"/>
<dbReference type="STRING" id="573370.DMR_31170"/>
<dbReference type="KEGG" id="dma:DMR_31170"/>
<dbReference type="eggNOG" id="COG0222">
    <property type="taxonomic scope" value="Bacteria"/>
</dbReference>
<dbReference type="HOGENOM" id="CLU_086499_3_0_7"/>
<dbReference type="OrthoDB" id="9811748at2"/>
<dbReference type="Proteomes" id="UP000009071">
    <property type="component" value="Chromosome"/>
</dbReference>
<dbReference type="GO" id="GO:0022625">
    <property type="term" value="C:cytosolic large ribosomal subunit"/>
    <property type="evidence" value="ECO:0007669"/>
    <property type="project" value="TreeGrafter"/>
</dbReference>
<dbReference type="GO" id="GO:0003729">
    <property type="term" value="F:mRNA binding"/>
    <property type="evidence" value="ECO:0007669"/>
    <property type="project" value="TreeGrafter"/>
</dbReference>
<dbReference type="GO" id="GO:0003735">
    <property type="term" value="F:structural constituent of ribosome"/>
    <property type="evidence" value="ECO:0007669"/>
    <property type="project" value="InterPro"/>
</dbReference>
<dbReference type="GO" id="GO:0006412">
    <property type="term" value="P:translation"/>
    <property type="evidence" value="ECO:0007669"/>
    <property type="project" value="UniProtKB-UniRule"/>
</dbReference>
<dbReference type="CDD" id="cd00387">
    <property type="entry name" value="Ribosomal_L7_L12"/>
    <property type="match status" value="1"/>
</dbReference>
<dbReference type="FunFam" id="3.30.1390.10:FF:000001">
    <property type="entry name" value="50S ribosomal protein L7/L12"/>
    <property type="match status" value="1"/>
</dbReference>
<dbReference type="Gene3D" id="3.30.1390.10">
    <property type="match status" value="1"/>
</dbReference>
<dbReference type="Gene3D" id="1.20.5.710">
    <property type="entry name" value="Single helix bin"/>
    <property type="match status" value="1"/>
</dbReference>
<dbReference type="HAMAP" id="MF_00368">
    <property type="entry name" value="Ribosomal_bL12"/>
    <property type="match status" value="1"/>
</dbReference>
<dbReference type="InterPro" id="IPR000206">
    <property type="entry name" value="Ribosomal_bL12"/>
</dbReference>
<dbReference type="InterPro" id="IPR013823">
    <property type="entry name" value="Ribosomal_bL12_C"/>
</dbReference>
<dbReference type="InterPro" id="IPR014719">
    <property type="entry name" value="Ribosomal_bL12_C/ClpS-like"/>
</dbReference>
<dbReference type="InterPro" id="IPR008932">
    <property type="entry name" value="Ribosomal_bL12_oligo"/>
</dbReference>
<dbReference type="InterPro" id="IPR036235">
    <property type="entry name" value="Ribosomal_bL12_oligo_N_sf"/>
</dbReference>
<dbReference type="NCBIfam" id="TIGR00855">
    <property type="entry name" value="L12"/>
    <property type="match status" value="1"/>
</dbReference>
<dbReference type="PANTHER" id="PTHR45987">
    <property type="entry name" value="39S RIBOSOMAL PROTEIN L12"/>
    <property type="match status" value="1"/>
</dbReference>
<dbReference type="PANTHER" id="PTHR45987:SF4">
    <property type="entry name" value="LARGE RIBOSOMAL SUBUNIT PROTEIN BL12M"/>
    <property type="match status" value="1"/>
</dbReference>
<dbReference type="Pfam" id="PF00542">
    <property type="entry name" value="Ribosomal_L12"/>
    <property type="match status" value="1"/>
</dbReference>
<dbReference type="Pfam" id="PF16320">
    <property type="entry name" value="Ribosomal_L12_N"/>
    <property type="match status" value="1"/>
</dbReference>
<dbReference type="SUPFAM" id="SSF54736">
    <property type="entry name" value="ClpS-like"/>
    <property type="match status" value="1"/>
</dbReference>
<dbReference type="SUPFAM" id="SSF48300">
    <property type="entry name" value="Ribosomal protein L7/12, oligomerisation (N-terminal) domain"/>
    <property type="match status" value="1"/>
</dbReference>
<accession>C4XIP0</accession>
<evidence type="ECO:0000255" key="1">
    <source>
        <dbReference type="HAMAP-Rule" id="MF_00368"/>
    </source>
</evidence>
<evidence type="ECO:0000305" key="2"/>
<gene>
    <name evidence="1" type="primary">rplL</name>
    <name type="ordered locus">DMR_31170</name>
</gene>
<sequence length="129" mass="13628">MSEITKEQVVDFIANMTVLELSQFIKELEEKFGVSAAAPAMGMMMAAPAAGEAAPAEEEKTEFDVILTNAGGNKIAVIKVVRALTGLGLKEAKAKVDELPSSIKEAVSKAEAEDAKKQLEESGATCEIK</sequence>
<proteinExistence type="inferred from homology"/>
<name>RL7_SOLM1</name>
<organism>
    <name type="scientific">Solidesulfovibrio magneticus (strain ATCC 700980 / DSM 13731 / RS-1)</name>
    <name type="common">Desulfovibrio magneticus</name>
    <dbReference type="NCBI Taxonomy" id="573370"/>
    <lineage>
        <taxon>Bacteria</taxon>
        <taxon>Pseudomonadati</taxon>
        <taxon>Thermodesulfobacteriota</taxon>
        <taxon>Desulfovibrionia</taxon>
        <taxon>Desulfovibrionales</taxon>
        <taxon>Desulfovibrionaceae</taxon>
        <taxon>Solidesulfovibrio</taxon>
    </lineage>
</organism>
<comment type="function">
    <text evidence="1">Forms part of the ribosomal stalk which helps the ribosome interact with GTP-bound translation factors. Is thus essential for accurate translation.</text>
</comment>
<comment type="subunit">
    <text evidence="1">Homodimer. Part of the ribosomal stalk of the 50S ribosomal subunit. Forms a multimeric L10(L12)X complex, where L10 forms an elongated spine to which 2 to 4 L12 dimers bind in a sequential fashion. Binds GTP-bound translation factors.</text>
</comment>
<comment type="similarity">
    <text evidence="1">Belongs to the bacterial ribosomal protein bL12 family.</text>
</comment>
<feature type="chain" id="PRO_1000205556" description="Large ribosomal subunit protein bL12">
    <location>
        <begin position="1"/>
        <end position="129"/>
    </location>
</feature>
<protein>
    <recommendedName>
        <fullName evidence="1">Large ribosomal subunit protein bL12</fullName>
    </recommendedName>
    <alternativeName>
        <fullName evidence="2">50S ribosomal protein L7/L12</fullName>
    </alternativeName>
</protein>
<keyword id="KW-0687">Ribonucleoprotein</keyword>
<keyword id="KW-0689">Ribosomal protein</keyword>
<reference key="1">
    <citation type="journal article" date="2009" name="Genome Res.">
        <title>Whole genome sequence of Desulfovibrio magneticus strain RS-1 revealed common gene clusters in magnetotactic bacteria.</title>
        <authorList>
            <person name="Nakazawa H."/>
            <person name="Arakaki A."/>
            <person name="Narita-Yamada S."/>
            <person name="Yashiro I."/>
            <person name="Jinno K."/>
            <person name="Aoki N."/>
            <person name="Tsuruyama A."/>
            <person name="Okamura Y."/>
            <person name="Tanikawa S."/>
            <person name="Fujita N."/>
            <person name="Takeyama H."/>
            <person name="Matsunaga T."/>
        </authorList>
    </citation>
    <scope>NUCLEOTIDE SEQUENCE [LARGE SCALE GENOMIC DNA]</scope>
    <source>
        <strain>ATCC 700980 / DSM 13731 / RS-1</strain>
    </source>
</reference>